<reference key="1">
    <citation type="submission" date="2006-12" db="EMBL/GenBank/DDBJ databases">
        <title>Complete sequence of chromosome 1 of Paracoccus denitrificans PD1222.</title>
        <authorList>
            <person name="Copeland A."/>
            <person name="Lucas S."/>
            <person name="Lapidus A."/>
            <person name="Barry K."/>
            <person name="Detter J.C."/>
            <person name="Glavina del Rio T."/>
            <person name="Hammon N."/>
            <person name="Israni S."/>
            <person name="Dalin E."/>
            <person name="Tice H."/>
            <person name="Pitluck S."/>
            <person name="Munk A.C."/>
            <person name="Brettin T."/>
            <person name="Bruce D."/>
            <person name="Han C."/>
            <person name="Tapia R."/>
            <person name="Gilna P."/>
            <person name="Schmutz J."/>
            <person name="Larimer F."/>
            <person name="Land M."/>
            <person name="Hauser L."/>
            <person name="Kyrpides N."/>
            <person name="Lykidis A."/>
            <person name="Spiro S."/>
            <person name="Richardson D.J."/>
            <person name="Moir J.W.B."/>
            <person name="Ferguson S.J."/>
            <person name="van Spanning R.J.M."/>
            <person name="Richardson P."/>
        </authorList>
    </citation>
    <scope>NUCLEOTIDE SEQUENCE [LARGE SCALE GENOMIC DNA]</scope>
    <source>
        <strain>Pd 1222</strain>
    </source>
</reference>
<feature type="chain" id="PRO_0000337453" description="Elongation factor Tu">
    <location>
        <begin position="1"/>
        <end position="391"/>
    </location>
</feature>
<feature type="domain" description="tr-type G">
    <location>
        <begin position="10"/>
        <end position="201"/>
    </location>
</feature>
<feature type="region of interest" description="G1" evidence="1">
    <location>
        <begin position="19"/>
        <end position="26"/>
    </location>
</feature>
<feature type="region of interest" description="G2" evidence="1">
    <location>
        <begin position="55"/>
        <end position="59"/>
    </location>
</feature>
<feature type="region of interest" description="G3" evidence="1">
    <location>
        <begin position="76"/>
        <end position="79"/>
    </location>
</feature>
<feature type="region of interest" description="G4" evidence="1">
    <location>
        <begin position="131"/>
        <end position="134"/>
    </location>
</feature>
<feature type="region of interest" description="G5" evidence="1">
    <location>
        <begin position="169"/>
        <end position="171"/>
    </location>
</feature>
<feature type="binding site" evidence="2">
    <location>
        <begin position="19"/>
        <end position="26"/>
    </location>
    <ligand>
        <name>GTP</name>
        <dbReference type="ChEBI" id="CHEBI:37565"/>
    </ligand>
</feature>
<feature type="binding site" evidence="2">
    <location>
        <position position="26"/>
    </location>
    <ligand>
        <name>Mg(2+)</name>
        <dbReference type="ChEBI" id="CHEBI:18420"/>
    </ligand>
</feature>
<feature type="binding site" evidence="2">
    <location>
        <begin position="76"/>
        <end position="80"/>
    </location>
    <ligand>
        <name>GTP</name>
        <dbReference type="ChEBI" id="CHEBI:37565"/>
    </ligand>
</feature>
<feature type="binding site" evidence="2">
    <location>
        <begin position="131"/>
        <end position="134"/>
    </location>
    <ligand>
        <name>GTP</name>
        <dbReference type="ChEBI" id="CHEBI:37565"/>
    </ligand>
</feature>
<name>EFTU_PARDP</name>
<keyword id="KW-0963">Cytoplasm</keyword>
<keyword id="KW-0251">Elongation factor</keyword>
<keyword id="KW-0342">GTP-binding</keyword>
<keyword id="KW-0378">Hydrolase</keyword>
<keyword id="KW-0460">Magnesium</keyword>
<keyword id="KW-0479">Metal-binding</keyword>
<keyword id="KW-0547">Nucleotide-binding</keyword>
<keyword id="KW-0648">Protein biosynthesis</keyword>
<keyword id="KW-1185">Reference proteome</keyword>
<organism>
    <name type="scientific">Paracoccus denitrificans (strain Pd 1222)</name>
    <dbReference type="NCBI Taxonomy" id="318586"/>
    <lineage>
        <taxon>Bacteria</taxon>
        <taxon>Pseudomonadati</taxon>
        <taxon>Pseudomonadota</taxon>
        <taxon>Alphaproteobacteria</taxon>
        <taxon>Rhodobacterales</taxon>
        <taxon>Paracoccaceae</taxon>
        <taxon>Paracoccus</taxon>
    </lineage>
</organism>
<accession>A1B002</accession>
<comment type="function">
    <text evidence="2">GTP hydrolase that promotes the GTP-dependent binding of aminoacyl-tRNA to the A-site of ribosomes during protein biosynthesis.</text>
</comment>
<comment type="catalytic activity">
    <reaction evidence="2">
        <text>GTP + H2O = GDP + phosphate + H(+)</text>
        <dbReference type="Rhea" id="RHEA:19669"/>
        <dbReference type="ChEBI" id="CHEBI:15377"/>
        <dbReference type="ChEBI" id="CHEBI:15378"/>
        <dbReference type="ChEBI" id="CHEBI:37565"/>
        <dbReference type="ChEBI" id="CHEBI:43474"/>
        <dbReference type="ChEBI" id="CHEBI:58189"/>
        <dbReference type="EC" id="3.6.5.3"/>
    </reaction>
    <physiologicalReaction direction="left-to-right" evidence="2">
        <dbReference type="Rhea" id="RHEA:19670"/>
    </physiologicalReaction>
</comment>
<comment type="subunit">
    <text evidence="2">Monomer.</text>
</comment>
<comment type="subcellular location">
    <subcellularLocation>
        <location evidence="2">Cytoplasm</location>
    </subcellularLocation>
</comment>
<comment type="similarity">
    <text evidence="2">Belongs to the TRAFAC class translation factor GTPase superfamily. Classic translation factor GTPase family. EF-Tu/EF-1A subfamily.</text>
</comment>
<evidence type="ECO:0000250" key="1"/>
<evidence type="ECO:0000255" key="2">
    <source>
        <dbReference type="HAMAP-Rule" id="MF_00118"/>
    </source>
</evidence>
<proteinExistence type="inferred from homology"/>
<sequence length="391" mass="42972">MAKAKFERTKPHVNIGTIGHVDHGKTTLTAAITKYFGEFKAYDQIDGAPEERARGITISTAHVEYESENRHYAHVDCPGHADYVKNMITGAAQMDGAILVVNAADGPMPQTREHILLGRQVGIPYMVVYLNKVDQVDDPELLELVEMEVRELLSSYDYPGDDIPIVKGSALAALEGRDAEIGENSIRELMKAVDDYIPTPERAVDLPFLMPIEDVFSISGRGTVVTGRVERGAVNVGDELEIVGIRPTKKTTCTGVEMFRKLLDRGEAGDNIGALLRGVERDGVERGQVLAKPGSVTPHTEFEAEAYILTKEEGGRHTPFFANYRPQFYFRTTDVTGTVKLPEGTEMVMPGDNLKFEVELIAPIAMEEKLRFAIREGGRTVGAGVVSKILK</sequence>
<gene>
    <name evidence="2" type="primary">tuf1</name>
    <name type="ordered locus">Pden_0734</name>
</gene>
<gene>
    <name evidence="2" type="primary">tuf2</name>
    <name type="ordered locus">Pden_0756</name>
</gene>
<dbReference type="EC" id="3.6.5.3" evidence="2"/>
<dbReference type="EMBL" id="CP000489">
    <property type="protein sequence ID" value="ABL68846.1"/>
    <property type="molecule type" value="Genomic_DNA"/>
</dbReference>
<dbReference type="EMBL" id="CP000489">
    <property type="protein sequence ID" value="ABL68868.1"/>
    <property type="molecule type" value="Genomic_DNA"/>
</dbReference>
<dbReference type="RefSeq" id="WP_011747079.1">
    <property type="nucleotide sequence ID" value="NC_008686.1"/>
</dbReference>
<dbReference type="SMR" id="A1B002"/>
<dbReference type="STRING" id="318586.Pden_0734"/>
<dbReference type="EnsemblBacteria" id="ABL68846">
    <property type="protein sequence ID" value="ABL68846"/>
    <property type="gene ID" value="Pden_0734"/>
</dbReference>
<dbReference type="EnsemblBacteria" id="ABL68868">
    <property type="protein sequence ID" value="ABL68868"/>
    <property type="gene ID" value="Pden_0756"/>
</dbReference>
<dbReference type="GeneID" id="93451980"/>
<dbReference type="KEGG" id="pde:Pden_0734"/>
<dbReference type="KEGG" id="pde:Pden_0756"/>
<dbReference type="eggNOG" id="COG0050">
    <property type="taxonomic scope" value="Bacteria"/>
</dbReference>
<dbReference type="HOGENOM" id="CLU_007265_0_1_5"/>
<dbReference type="OrthoDB" id="9803139at2"/>
<dbReference type="Proteomes" id="UP000000361">
    <property type="component" value="Chromosome 1"/>
</dbReference>
<dbReference type="GO" id="GO:0005829">
    <property type="term" value="C:cytosol"/>
    <property type="evidence" value="ECO:0007669"/>
    <property type="project" value="TreeGrafter"/>
</dbReference>
<dbReference type="GO" id="GO:0005525">
    <property type="term" value="F:GTP binding"/>
    <property type="evidence" value="ECO:0007669"/>
    <property type="project" value="UniProtKB-UniRule"/>
</dbReference>
<dbReference type="GO" id="GO:0003924">
    <property type="term" value="F:GTPase activity"/>
    <property type="evidence" value="ECO:0007669"/>
    <property type="project" value="InterPro"/>
</dbReference>
<dbReference type="GO" id="GO:0097216">
    <property type="term" value="F:guanosine tetraphosphate binding"/>
    <property type="evidence" value="ECO:0007669"/>
    <property type="project" value="UniProtKB-ARBA"/>
</dbReference>
<dbReference type="GO" id="GO:0003746">
    <property type="term" value="F:translation elongation factor activity"/>
    <property type="evidence" value="ECO:0007669"/>
    <property type="project" value="UniProtKB-UniRule"/>
</dbReference>
<dbReference type="CDD" id="cd01884">
    <property type="entry name" value="EF_Tu"/>
    <property type="match status" value="1"/>
</dbReference>
<dbReference type="CDD" id="cd03697">
    <property type="entry name" value="EFTU_II"/>
    <property type="match status" value="1"/>
</dbReference>
<dbReference type="CDD" id="cd03707">
    <property type="entry name" value="EFTU_III"/>
    <property type="match status" value="1"/>
</dbReference>
<dbReference type="FunFam" id="2.40.30.10:FF:000001">
    <property type="entry name" value="Elongation factor Tu"/>
    <property type="match status" value="1"/>
</dbReference>
<dbReference type="FunFam" id="3.40.50.300:FF:000003">
    <property type="entry name" value="Elongation factor Tu"/>
    <property type="match status" value="1"/>
</dbReference>
<dbReference type="Gene3D" id="3.40.50.300">
    <property type="entry name" value="P-loop containing nucleotide triphosphate hydrolases"/>
    <property type="match status" value="1"/>
</dbReference>
<dbReference type="Gene3D" id="2.40.30.10">
    <property type="entry name" value="Translation factors"/>
    <property type="match status" value="2"/>
</dbReference>
<dbReference type="HAMAP" id="MF_00118_B">
    <property type="entry name" value="EF_Tu_B"/>
    <property type="match status" value="1"/>
</dbReference>
<dbReference type="InterPro" id="IPR041709">
    <property type="entry name" value="EF-Tu_GTP-bd"/>
</dbReference>
<dbReference type="InterPro" id="IPR050055">
    <property type="entry name" value="EF-Tu_GTPase"/>
</dbReference>
<dbReference type="InterPro" id="IPR004161">
    <property type="entry name" value="EFTu-like_2"/>
</dbReference>
<dbReference type="InterPro" id="IPR033720">
    <property type="entry name" value="EFTU_2"/>
</dbReference>
<dbReference type="InterPro" id="IPR031157">
    <property type="entry name" value="G_TR_CS"/>
</dbReference>
<dbReference type="InterPro" id="IPR027417">
    <property type="entry name" value="P-loop_NTPase"/>
</dbReference>
<dbReference type="InterPro" id="IPR005225">
    <property type="entry name" value="Small_GTP-bd"/>
</dbReference>
<dbReference type="InterPro" id="IPR000795">
    <property type="entry name" value="T_Tr_GTP-bd_dom"/>
</dbReference>
<dbReference type="InterPro" id="IPR009000">
    <property type="entry name" value="Transl_B-barrel_sf"/>
</dbReference>
<dbReference type="InterPro" id="IPR009001">
    <property type="entry name" value="Transl_elong_EF1A/Init_IF2_C"/>
</dbReference>
<dbReference type="InterPro" id="IPR004541">
    <property type="entry name" value="Transl_elong_EFTu/EF1A_bac/org"/>
</dbReference>
<dbReference type="InterPro" id="IPR004160">
    <property type="entry name" value="Transl_elong_EFTu/EF1A_C"/>
</dbReference>
<dbReference type="NCBIfam" id="TIGR00485">
    <property type="entry name" value="EF-Tu"/>
    <property type="match status" value="1"/>
</dbReference>
<dbReference type="NCBIfam" id="NF000766">
    <property type="entry name" value="PRK00049.1"/>
    <property type="match status" value="1"/>
</dbReference>
<dbReference type="NCBIfam" id="NF009372">
    <property type="entry name" value="PRK12735.1"/>
    <property type="match status" value="1"/>
</dbReference>
<dbReference type="NCBIfam" id="NF009373">
    <property type="entry name" value="PRK12736.1"/>
    <property type="match status" value="1"/>
</dbReference>
<dbReference type="NCBIfam" id="TIGR00231">
    <property type="entry name" value="small_GTP"/>
    <property type="match status" value="1"/>
</dbReference>
<dbReference type="PANTHER" id="PTHR43721:SF22">
    <property type="entry name" value="ELONGATION FACTOR TU, MITOCHONDRIAL"/>
    <property type="match status" value="1"/>
</dbReference>
<dbReference type="PANTHER" id="PTHR43721">
    <property type="entry name" value="ELONGATION FACTOR TU-RELATED"/>
    <property type="match status" value="1"/>
</dbReference>
<dbReference type="Pfam" id="PF00009">
    <property type="entry name" value="GTP_EFTU"/>
    <property type="match status" value="1"/>
</dbReference>
<dbReference type="Pfam" id="PF03144">
    <property type="entry name" value="GTP_EFTU_D2"/>
    <property type="match status" value="1"/>
</dbReference>
<dbReference type="Pfam" id="PF03143">
    <property type="entry name" value="GTP_EFTU_D3"/>
    <property type="match status" value="1"/>
</dbReference>
<dbReference type="PRINTS" id="PR00315">
    <property type="entry name" value="ELONGATNFCT"/>
</dbReference>
<dbReference type="SUPFAM" id="SSF50465">
    <property type="entry name" value="EF-Tu/eEF-1alpha/eIF2-gamma C-terminal domain"/>
    <property type="match status" value="1"/>
</dbReference>
<dbReference type="SUPFAM" id="SSF52540">
    <property type="entry name" value="P-loop containing nucleoside triphosphate hydrolases"/>
    <property type="match status" value="1"/>
</dbReference>
<dbReference type="SUPFAM" id="SSF50447">
    <property type="entry name" value="Translation proteins"/>
    <property type="match status" value="1"/>
</dbReference>
<dbReference type="PROSITE" id="PS00301">
    <property type="entry name" value="G_TR_1"/>
    <property type="match status" value="1"/>
</dbReference>
<dbReference type="PROSITE" id="PS51722">
    <property type="entry name" value="G_TR_2"/>
    <property type="match status" value="1"/>
</dbReference>
<protein>
    <recommendedName>
        <fullName evidence="2">Elongation factor Tu</fullName>
        <shortName evidence="2">EF-Tu</shortName>
        <ecNumber evidence="2">3.6.5.3</ecNumber>
    </recommendedName>
</protein>